<feature type="chain" id="PRO_1000215998" description="Beta-ketoacyl-[acyl-carrier-protein] synthase III">
    <location>
        <begin position="1"/>
        <end position="330"/>
    </location>
</feature>
<feature type="region of interest" description="ACP-binding" evidence="1">
    <location>
        <begin position="258"/>
        <end position="262"/>
    </location>
</feature>
<feature type="active site" evidence="1">
    <location>
        <position position="118"/>
    </location>
</feature>
<feature type="active site" evidence="1">
    <location>
        <position position="257"/>
    </location>
</feature>
<feature type="active site" evidence="1">
    <location>
        <position position="287"/>
    </location>
</feature>
<name>FABH_NITV9</name>
<evidence type="ECO:0000255" key="1">
    <source>
        <dbReference type="HAMAP-Rule" id="MF_01815"/>
    </source>
</evidence>
<gene>
    <name evidence="1" type="primary">fabH</name>
    <name type="ordered locus">DvMF_3101</name>
</gene>
<proteinExistence type="inferred from homology"/>
<sequence length="330" mass="34881">MTASRDIACRVRGFGAYTPVDVLTNFDLEKFVETTDEWITTRTGIRQRHRLAEGQNASDAATEAARLALADAGMEPGEITHVINATCTPDYLCPNTACLVEAKLGIMGAMAFDFNAACSGYVYGLSMARAIVAAQPEARVLLTATEALTRRLNWADRTTCVLFGDGAGASVITAEGEGALLEDVLCASDGNLGGLLTIGGGTHTPYAKGDPVGEDFFVQMNGRDVFKHAVRNMAAISQDVLARNGLTIDDVALVIPHQANLRIIEAVGDRLGVPAERVFVNLHEFGNTSAASVPLAIADARAKGVLRPGMRVLLATFGGGFTWGAALLHF</sequence>
<accession>B8DJG1</accession>
<protein>
    <recommendedName>
        <fullName evidence="1">Beta-ketoacyl-[acyl-carrier-protein] synthase III</fullName>
        <shortName evidence="1">Beta-ketoacyl-ACP synthase III</shortName>
        <shortName evidence="1">KAS III</shortName>
        <ecNumber evidence="1">2.3.1.180</ecNumber>
    </recommendedName>
    <alternativeName>
        <fullName evidence="1">3-oxoacyl-[acyl-carrier-protein] synthase 3</fullName>
    </alternativeName>
    <alternativeName>
        <fullName evidence="1">3-oxoacyl-[acyl-carrier-protein] synthase III</fullName>
    </alternativeName>
</protein>
<keyword id="KW-0012">Acyltransferase</keyword>
<keyword id="KW-0963">Cytoplasm</keyword>
<keyword id="KW-0275">Fatty acid biosynthesis</keyword>
<keyword id="KW-0276">Fatty acid metabolism</keyword>
<keyword id="KW-0444">Lipid biosynthesis</keyword>
<keyword id="KW-0443">Lipid metabolism</keyword>
<keyword id="KW-0511">Multifunctional enzyme</keyword>
<keyword id="KW-0808">Transferase</keyword>
<organism>
    <name type="scientific">Nitratidesulfovibrio vulgaris (strain DSM 19637 / Miyazaki F)</name>
    <name type="common">Desulfovibrio vulgaris</name>
    <dbReference type="NCBI Taxonomy" id="883"/>
    <lineage>
        <taxon>Bacteria</taxon>
        <taxon>Pseudomonadati</taxon>
        <taxon>Thermodesulfobacteriota</taxon>
        <taxon>Desulfovibrionia</taxon>
        <taxon>Desulfovibrionales</taxon>
        <taxon>Desulfovibrionaceae</taxon>
        <taxon>Nitratidesulfovibrio</taxon>
    </lineage>
</organism>
<comment type="function">
    <text evidence="1">Catalyzes the condensation reaction of fatty acid synthesis by the addition to an acyl acceptor of two carbons from malonyl-ACP. Catalyzes the first condensation reaction which initiates fatty acid synthesis and may therefore play a role in governing the total rate of fatty acid production. Possesses both acetoacetyl-ACP synthase and acetyl transacylase activities. Its substrate specificity determines the biosynthesis of branched-chain and/or straight-chain of fatty acids.</text>
</comment>
<comment type="catalytic activity">
    <reaction evidence="1">
        <text>malonyl-[ACP] + acetyl-CoA + H(+) = 3-oxobutanoyl-[ACP] + CO2 + CoA</text>
        <dbReference type="Rhea" id="RHEA:12080"/>
        <dbReference type="Rhea" id="RHEA-COMP:9623"/>
        <dbReference type="Rhea" id="RHEA-COMP:9625"/>
        <dbReference type="ChEBI" id="CHEBI:15378"/>
        <dbReference type="ChEBI" id="CHEBI:16526"/>
        <dbReference type="ChEBI" id="CHEBI:57287"/>
        <dbReference type="ChEBI" id="CHEBI:57288"/>
        <dbReference type="ChEBI" id="CHEBI:78449"/>
        <dbReference type="ChEBI" id="CHEBI:78450"/>
        <dbReference type="EC" id="2.3.1.180"/>
    </reaction>
</comment>
<comment type="pathway">
    <text evidence="1">Lipid metabolism; fatty acid biosynthesis.</text>
</comment>
<comment type="subunit">
    <text evidence="1">Homodimer.</text>
</comment>
<comment type="subcellular location">
    <subcellularLocation>
        <location evidence="1">Cytoplasm</location>
    </subcellularLocation>
</comment>
<comment type="domain">
    <text evidence="1">The last Arg residue of the ACP-binding site is essential for the weak association between ACP/AcpP and FabH.</text>
</comment>
<comment type="similarity">
    <text evidence="1">Belongs to the thiolase-like superfamily. FabH family.</text>
</comment>
<reference key="1">
    <citation type="submission" date="2008-10" db="EMBL/GenBank/DDBJ databases">
        <title>Complete sequence of Desulfovibrio vulgaris str. 'Miyazaki F'.</title>
        <authorList>
            <person name="Lucas S."/>
            <person name="Copeland A."/>
            <person name="Lapidus A."/>
            <person name="Glavina del Rio T."/>
            <person name="Dalin E."/>
            <person name="Tice H."/>
            <person name="Bruce D."/>
            <person name="Goodwin L."/>
            <person name="Pitluck S."/>
            <person name="Sims D."/>
            <person name="Brettin T."/>
            <person name="Detter J.C."/>
            <person name="Han C."/>
            <person name="Larimer F."/>
            <person name="Land M."/>
            <person name="Hauser L."/>
            <person name="Kyrpides N."/>
            <person name="Mikhailova N."/>
            <person name="Hazen T.C."/>
            <person name="Richardson P."/>
        </authorList>
    </citation>
    <scope>NUCLEOTIDE SEQUENCE [LARGE SCALE GENOMIC DNA]</scope>
    <source>
        <strain>DSM 19637 / Miyazaki F</strain>
    </source>
</reference>
<dbReference type="EC" id="2.3.1.180" evidence="1"/>
<dbReference type="EMBL" id="CP001197">
    <property type="protein sequence ID" value="ACL10038.1"/>
    <property type="molecule type" value="Genomic_DNA"/>
</dbReference>
<dbReference type="SMR" id="B8DJG1"/>
<dbReference type="STRING" id="883.DvMF_3101"/>
<dbReference type="KEGG" id="dvm:DvMF_3101"/>
<dbReference type="eggNOG" id="COG0332">
    <property type="taxonomic scope" value="Bacteria"/>
</dbReference>
<dbReference type="HOGENOM" id="CLU_039592_3_1_7"/>
<dbReference type="OrthoDB" id="9815506at2"/>
<dbReference type="UniPathway" id="UPA00094"/>
<dbReference type="GO" id="GO:0005737">
    <property type="term" value="C:cytoplasm"/>
    <property type="evidence" value="ECO:0007669"/>
    <property type="project" value="UniProtKB-SubCell"/>
</dbReference>
<dbReference type="GO" id="GO:0004315">
    <property type="term" value="F:3-oxoacyl-[acyl-carrier-protein] synthase activity"/>
    <property type="evidence" value="ECO:0007669"/>
    <property type="project" value="InterPro"/>
</dbReference>
<dbReference type="GO" id="GO:0033818">
    <property type="term" value="F:beta-ketoacyl-acyl-carrier-protein synthase III activity"/>
    <property type="evidence" value="ECO:0007669"/>
    <property type="project" value="UniProtKB-UniRule"/>
</dbReference>
<dbReference type="GO" id="GO:0006633">
    <property type="term" value="P:fatty acid biosynthetic process"/>
    <property type="evidence" value="ECO:0007669"/>
    <property type="project" value="UniProtKB-UniRule"/>
</dbReference>
<dbReference type="GO" id="GO:0044550">
    <property type="term" value="P:secondary metabolite biosynthetic process"/>
    <property type="evidence" value="ECO:0007669"/>
    <property type="project" value="TreeGrafter"/>
</dbReference>
<dbReference type="CDD" id="cd00830">
    <property type="entry name" value="KAS_III"/>
    <property type="match status" value="1"/>
</dbReference>
<dbReference type="Gene3D" id="3.40.47.10">
    <property type="match status" value="1"/>
</dbReference>
<dbReference type="HAMAP" id="MF_01815">
    <property type="entry name" value="FabH"/>
    <property type="match status" value="1"/>
</dbReference>
<dbReference type="InterPro" id="IPR013747">
    <property type="entry name" value="ACP_syn_III_C"/>
</dbReference>
<dbReference type="InterPro" id="IPR013751">
    <property type="entry name" value="ACP_syn_III_N"/>
</dbReference>
<dbReference type="InterPro" id="IPR004655">
    <property type="entry name" value="FabH"/>
</dbReference>
<dbReference type="InterPro" id="IPR016039">
    <property type="entry name" value="Thiolase-like"/>
</dbReference>
<dbReference type="NCBIfam" id="TIGR00747">
    <property type="entry name" value="fabH"/>
    <property type="match status" value="1"/>
</dbReference>
<dbReference type="NCBIfam" id="NF006829">
    <property type="entry name" value="PRK09352.1"/>
    <property type="match status" value="1"/>
</dbReference>
<dbReference type="PANTHER" id="PTHR34069">
    <property type="entry name" value="3-OXOACYL-[ACYL-CARRIER-PROTEIN] SYNTHASE 3"/>
    <property type="match status" value="1"/>
</dbReference>
<dbReference type="PANTHER" id="PTHR34069:SF2">
    <property type="entry name" value="BETA-KETOACYL-[ACYL-CARRIER-PROTEIN] SYNTHASE III"/>
    <property type="match status" value="1"/>
</dbReference>
<dbReference type="Pfam" id="PF08545">
    <property type="entry name" value="ACP_syn_III"/>
    <property type="match status" value="1"/>
</dbReference>
<dbReference type="Pfam" id="PF08541">
    <property type="entry name" value="ACP_syn_III_C"/>
    <property type="match status" value="1"/>
</dbReference>
<dbReference type="SUPFAM" id="SSF53901">
    <property type="entry name" value="Thiolase-like"/>
    <property type="match status" value="1"/>
</dbReference>